<protein>
    <recommendedName>
        <fullName evidence="5">Exosomal polycystin-1-interacting protein</fullName>
    </recommendedName>
    <alternativeName>
        <fullName>B37</fullName>
    </alternativeName>
    <alternativeName>
        <fullName evidence="3">Polycystin-1-interacting protein 1</fullName>
    </alternativeName>
</protein>
<dbReference type="EMBL" id="AF231922">
    <property type="protein sequence ID" value="AAF72946.1"/>
    <property type="status" value="ALT_FRAME"/>
    <property type="molecule type" value="mRNA"/>
</dbReference>
<dbReference type="EMBL" id="AK290983">
    <property type="protein sequence ID" value="BAF83672.1"/>
    <property type="molecule type" value="mRNA"/>
</dbReference>
<dbReference type="EMBL" id="AP000280">
    <property type="status" value="NOT_ANNOTATED_CDS"/>
    <property type="molecule type" value="Genomic_DNA"/>
</dbReference>
<dbReference type="CCDS" id="CCDS42919.2"/>
<dbReference type="RefSeq" id="NP_001155967.2">
    <property type="nucleotide sequence ID" value="NM_001162495.3"/>
</dbReference>
<dbReference type="RefSeq" id="NP_001155968.2">
    <property type="nucleotide sequence ID" value="NM_001162496.3"/>
</dbReference>
<dbReference type="RefSeq" id="NP_062542.5">
    <property type="nucleotide sequence ID" value="NM_019596.6"/>
</dbReference>
<dbReference type="IntAct" id="Q9NYP8">
    <property type="interactions" value="1"/>
</dbReference>
<dbReference type="STRING" id="9606.ENSP00000418653"/>
<dbReference type="GlyCosmos" id="Q9NYP8">
    <property type="glycosylation" value="3 sites, No reported glycans"/>
</dbReference>
<dbReference type="GlyGen" id="Q9NYP8">
    <property type="glycosylation" value="5 sites"/>
</dbReference>
<dbReference type="iPTMnet" id="Q9NYP8"/>
<dbReference type="PhosphoSitePlus" id="Q9NYP8"/>
<dbReference type="BioMuta" id="C21orf62"/>
<dbReference type="DMDM" id="281371552"/>
<dbReference type="MassIVE" id="Q9NYP8"/>
<dbReference type="PaxDb" id="9606-ENSP00000444950"/>
<dbReference type="ProteomicsDB" id="83260"/>
<dbReference type="Antibodypedia" id="4996">
    <property type="antibodies" value="105 antibodies from 16 providers"/>
</dbReference>
<dbReference type="DNASU" id="56245"/>
<dbReference type="Ensembl" id="ENST00000479548.2">
    <property type="protein sequence ID" value="ENSP00000418653.1"/>
    <property type="gene ID" value="ENSG00000205929.11"/>
</dbReference>
<dbReference type="Ensembl" id="ENST00000487113.1">
    <property type="protein sequence ID" value="ENSP00000418511.1"/>
    <property type="gene ID" value="ENSG00000205929.11"/>
</dbReference>
<dbReference type="Ensembl" id="ENST00000490358.5">
    <property type="protein sequence ID" value="ENSP00000418830.1"/>
    <property type="gene ID" value="ENSG00000205929.11"/>
</dbReference>
<dbReference type="Ensembl" id="ENST00000571812.1">
    <property type="protein sequence ID" value="ENSP00000461558.1"/>
    <property type="gene ID" value="ENSG00000262938.6"/>
</dbReference>
<dbReference type="Ensembl" id="ENST00000576061.1">
    <property type="protein sequence ID" value="ENSP00000460629.1"/>
    <property type="gene ID" value="ENSG00000262938.6"/>
</dbReference>
<dbReference type="Ensembl" id="ENST00000576372.5">
    <property type="protein sequence ID" value="ENSP00000461359.1"/>
    <property type="gene ID" value="ENSG00000262938.6"/>
</dbReference>
<dbReference type="GeneID" id="56245"/>
<dbReference type="KEGG" id="hsa:56245"/>
<dbReference type="MANE-Select" id="ENST00000479548.2">
    <property type="protein sequence ID" value="ENSP00000418653.1"/>
    <property type="RefSeq nucleotide sequence ID" value="NM_001162495.3"/>
    <property type="RefSeq protein sequence ID" value="NP_001155967.2"/>
</dbReference>
<dbReference type="UCSC" id="uc010glz.4">
    <property type="organism name" value="human"/>
</dbReference>
<dbReference type="AGR" id="HGNC:1305"/>
<dbReference type="CTD" id="56245"/>
<dbReference type="DisGeNET" id="56245"/>
<dbReference type="GeneCards" id="EPCIP"/>
<dbReference type="HGNC" id="HGNC:1305">
    <property type="gene designation" value="EPCIP"/>
</dbReference>
<dbReference type="HPA" id="ENSG00000205929">
    <property type="expression patterns" value="Tissue enhanced (choroid plexus, epididymis, ovary)"/>
</dbReference>
<dbReference type="neXtProt" id="NX_Q9NYP8"/>
<dbReference type="OpenTargets" id="ENSG00000205929"/>
<dbReference type="PharmGKB" id="PA25857"/>
<dbReference type="VEuPathDB" id="HostDB:ENSG00000205929"/>
<dbReference type="eggNOG" id="ENOG502S2I2">
    <property type="taxonomic scope" value="Eukaryota"/>
</dbReference>
<dbReference type="GeneTree" id="ENSGT00390000016499"/>
<dbReference type="HOGENOM" id="CLU_079917_0_0_1"/>
<dbReference type="InParanoid" id="Q9NYP8"/>
<dbReference type="OMA" id="SRWNSEM"/>
<dbReference type="OrthoDB" id="8434774at2759"/>
<dbReference type="PAN-GO" id="Q9NYP8">
    <property type="GO annotations" value="0 GO annotations based on evolutionary models"/>
</dbReference>
<dbReference type="PhylomeDB" id="Q9NYP8"/>
<dbReference type="TreeFam" id="TF336022"/>
<dbReference type="PathwayCommons" id="Q9NYP8"/>
<dbReference type="BioGRID-ORCS" id="56245">
    <property type="hits" value="10 hits in 1135 CRISPR screens"/>
</dbReference>
<dbReference type="ChiTaRS" id="C21orf62">
    <property type="organism name" value="human"/>
</dbReference>
<dbReference type="GenomeRNAi" id="56245"/>
<dbReference type="Pharos" id="Q9NYP8">
    <property type="development level" value="Tdark"/>
</dbReference>
<dbReference type="PRO" id="PR:Q9NYP8"/>
<dbReference type="Proteomes" id="UP000005640">
    <property type="component" value="Chromosome 21"/>
</dbReference>
<dbReference type="RNAct" id="Q9NYP8">
    <property type="molecule type" value="protein"/>
</dbReference>
<dbReference type="Bgee" id="ENSG00000205929">
    <property type="expression patterns" value="Expressed in ovary and 84 other cell types or tissues"/>
</dbReference>
<dbReference type="ExpressionAtlas" id="Q9NYP8">
    <property type="expression patterns" value="baseline and differential"/>
</dbReference>
<dbReference type="GO" id="GO:0070062">
    <property type="term" value="C:extracellular exosome"/>
    <property type="evidence" value="ECO:0000314"/>
    <property type="project" value="UniProtKB"/>
</dbReference>
<dbReference type="GO" id="GO:0140494">
    <property type="term" value="C:migrasome"/>
    <property type="evidence" value="ECO:0000314"/>
    <property type="project" value="UniProtKB"/>
</dbReference>
<dbReference type="GO" id="GO:0042802">
    <property type="term" value="F:identical protein binding"/>
    <property type="evidence" value="ECO:0000353"/>
    <property type="project" value="IntAct"/>
</dbReference>
<dbReference type="GO" id="GO:0160040">
    <property type="term" value="P:mitocytosis"/>
    <property type="evidence" value="ECO:0000314"/>
    <property type="project" value="UniProtKB"/>
</dbReference>
<dbReference type="InterPro" id="IPR029250">
    <property type="entry name" value="ECPIP"/>
</dbReference>
<dbReference type="PANTHER" id="PTHR35658:SF1">
    <property type="entry name" value="CHROMOSOME 21 OPEN READING FRAME 62"/>
    <property type="match status" value="1"/>
</dbReference>
<dbReference type="PANTHER" id="PTHR35658">
    <property type="entry name" value="RCG58666, ISOFORM CRA_A"/>
    <property type="match status" value="1"/>
</dbReference>
<dbReference type="Pfam" id="PF15137">
    <property type="entry name" value="ECPIP"/>
    <property type="match status" value="1"/>
</dbReference>
<name>EPCIP_HUMAN</name>
<reference key="1">
    <citation type="journal article" date="2000" name="Gene">
        <title>Criteria for gene identification and features of genome organization: analysis of 6.5 Mb of DNA sequence from human chromosome 21.</title>
        <authorList>
            <person name="Slavov D."/>
            <person name="Hattori M."/>
            <person name="Sakaki Y."/>
            <person name="Rosenthal A."/>
            <person name="Shimizu N."/>
            <person name="Minoshima S."/>
            <person name="Kudoh J."/>
            <person name="Yaspo M.-L."/>
            <person name="Ramser J."/>
            <person name="Reinhardt R."/>
            <person name="Reimer C."/>
            <person name="Clancy K."/>
            <person name="Rynditch A."/>
            <person name="Gardiner K."/>
        </authorList>
    </citation>
    <scope>NUCLEOTIDE SEQUENCE [MRNA]</scope>
</reference>
<reference key="2">
    <citation type="journal article" date="2004" name="Nat. Genet.">
        <title>Complete sequencing and characterization of 21,243 full-length human cDNAs.</title>
        <authorList>
            <person name="Ota T."/>
            <person name="Suzuki Y."/>
            <person name="Nishikawa T."/>
            <person name="Otsuki T."/>
            <person name="Sugiyama T."/>
            <person name="Irie R."/>
            <person name="Wakamatsu A."/>
            <person name="Hayashi K."/>
            <person name="Sato H."/>
            <person name="Nagai K."/>
            <person name="Kimura K."/>
            <person name="Makita H."/>
            <person name="Sekine M."/>
            <person name="Obayashi M."/>
            <person name="Nishi T."/>
            <person name="Shibahara T."/>
            <person name="Tanaka T."/>
            <person name="Ishii S."/>
            <person name="Yamamoto J."/>
            <person name="Saito K."/>
            <person name="Kawai Y."/>
            <person name="Isono Y."/>
            <person name="Nakamura Y."/>
            <person name="Nagahari K."/>
            <person name="Murakami K."/>
            <person name="Yasuda T."/>
            <person name="Iwayanagi T."/>
            <person name="Wagatsuma M."/>
            <person name="Shiratori A."/>
            <person name="Sudo H."/>
            <person name="Hosoiri T."/>
            <person name="Kaku Y."/>
            <person name="Kodaira H."/>
            <person name="Kondo H."/>
            <person name="Sugawara M."/>
            <person name="Takahashi M."/>
            <person name="Kanda K."/>
            <person name="Yokoi T."/>
            <person name="Furuya T."/>
            <person name="Kikkawa E."/>
            <person name="Omura Y."/>
            <person name="Abe K."/>
            <person name="Kamihara K."/>
            <person name="Katsuta N."/>
            <person name="Sato K."/>
            <person name="Tanikawa M."/>
            <person name="Yamazaki M."/>
            <person name="Ninomiya K."/>
            <person name="Ishibashi T."/>
            <person name="Yamashita H."/>
            <person name="Murakawa K."/>
            <person name="Fujimori K."/>
            <person name="Tanai H."/>
            <person name="Kimata M."/>
            <person name="Watanabe M."/>
            <person name="Hiraoka S."/>
            <person name="Chiba Y."/>
            <person name="Ishida S."/>
            <person name="Ono Y."/>
            <person name="Takiguchi S."/>
            <person name="Watanabe S."/>
            <person name="Yosida M."/>
            <person name="Hotuta T."/>
            <person name="Kusano J."/>
            <person name="Kanehori K."/>
            <person name="Takahashi-Fujii A."/>
            <person name="Hara H."/>
            <person name="Tanase T.-O."/>
            <person name="Nomura Y."/>
            <person name="Togiya S."/>
            <person name="Komai F."/>
            <person name="Hara R."/>
            <person name="Takeuchi K."/>
            <person name="Arita M."/>
            <person name="Imose N."/>
            <person name="Musashino K."/>
            <person name="Yuuki H."/>
            <person name="Oshima A."/>
            <person name="Sasaki N."/>
            <person name="Aotsuka S."/>
            <person name="Yoshikawa Y."/>
            <person name="Matsunawa H."/>
            <person name="Ichihara T."/>
            <person name="Shiohata N."/>
            <person name="Sano S."/>
            <person name="Moriya S."/>
            <person name="Momiyama H."/>
            <person name="Satoh N."/>
            <person name="Takami S."/>
            <person name="Terashima Y."/>
            <person name="Suzuki O."/>
            <person name="Nakagawa S."/>
            <person name="Senoh A."/>
            <person name="Mizoguchi H."/>
            <person name="Goto Y."/>
            <person name="Shimizu F."/>
            <person name="Wakebe H."/>
            <person name="Hishigaki H."/>
            <person name="Watanabe T."/>
            <person name="Sugiyama A."/>
            <person name="Takemoto M."/>
            <person name="Kawakami B."/>
            <person name="Yamazaki M."/>
            <person name="Watanabe K."/>
            <person name="Kumagai A."/>
            <person name="Itakura S."/>
            <person name="Fukuzumi Y."/>
            <person name="Fujimori Y."/>
            <person name="Komiyama M."/>
            <person name="Tashiro H."/>
            <person name="Tanigami A."/>
            <person name="Fujiwara T."/>
            <person name="Ono T."/>
            <person name="Yamada K."/>
            <person name="Fujii Y."/>
            <person name="Ozaki K."/>
            <person name="Hirao M."/>
            <person name="Ohmori Y."/>
            <person name="Kawabata A."/>
            <person name="Hikiji T."/>
            <person name="Kobatake N."/>
            <person name="Inagaki H."/>
            <person name="Ikema Y."/>
            <person name="Okamoto S."/>
            <person name="Okitani R."/>
            <person name="Kawakami T."/>
            <person name="Noguchi S."/>
            <person name="Itoh T."/>
            <person name="Shigeta K."/>
            <person name="Senba T."/>
            <person name="Matsumura K."/>
            <person name="Nakajima Y."/>
            <person name="Mizuno T."/>
            <person name="Morinaga M."/>
            <person name="Sasaki M."/>
            <person name="Togashi T."/>
            <person name="Oyama M."/>
            <person name="Hata H."/>
            <person name="Watanabe M."/>
            <person name="Komatsu T."/>
            <person name="Mizushima-Sugano J."/>
            <person name="Satoh T."/>
            <person name="Shirai Y."/>
            <person name="Takahashi Y."/>
            <person name="Nakagawa K."/>
            <person name="Okumura K."/>
            <person name="Nagase T."/>
            <person name="Nomura N."/>
            <person name="Kikuchi H."/>
            <person name="Masuho Y."/>
            <person name="Yamashita R."/>
            <person name="Nakai K."/>
            <person name="Yada T."/>
            <person name="Nakamura Y."/>
            <person name="Ohara O."/>
            <person name="Isogai T."/>
            <person name="Sugano S."/>
        </authorList>
    </citation>
    <scope>NUCLEOTIDE SEQUENCE [LARGE SCALE MRNA]</scope>
</reference>
<reference key="3">
    <citation type="journal article" date="2000" name="Nature">
        <title>The DNA sequence of human chromosome 21.</title>
        <authorList>
            <person name="Hattori M."/>
            <person name="Fujiyama A."/>
            <person name="Taylor T.D."/>
            <person name="Watanabe H."/>
            <person name="Yada T."/>
            <person name="Park H.-S."/>
            <person name="Toyoda A."/>
            <person name="Ishii K."/>
            <person name="Totoki Y."/>
            <person name="Choi D.-K."/>
            <person name="Groner Y."/>
            <person name="Soeda E."/>
            <person name="Ohki M."/>
            <person name="Takagi T."/>
            <person name="Sakaki Y."/>
            <person name="Taudien S."/>
            <person name="Blechschmidt K."/>
            <person name="Polley A."/>
            <person name="Menzel U."/>
            <person name="Delabar J."/>
            <person name="Kumpf K."/>
            <person name="Lehmann R."/>
            <person name="Patterson D."/>
            <person name="Reichwald K."/>
            <person name="Rump A."/>
            <person name="Schillhabel M."/>
            <person name="Schudy A."/>
            <person name="Zimmermann W."/>
            <person name="Rosenthal A."/>
            <person name="Kudoh J."/>
            <person name="Shibuya K."/>
            <person name="Kawasaki K."/>
            <person name="Asakawa S."/>
            <person name="Shintani A."/>
            <person name="Sasaki T."/>
            <person name="Nagamine K."/>
            <person name="Mitsuyama S."/>
            <person name="Antonarakis S.E."/>
            <person name="Minoshima S."/>
            <person name="Shimizu N."/>
            <person name="Nordsiek G."/>
            <person name="Hornischer K."/>
            <person name="Brandt P."/>
            <person name="Scharfe M."/>
            <person name="Schoen O."/>
            <person name="Desario A."/>
            <person name="Reichelt J."/>
            <person name="Kauer G."/>
            <person name="Bloecker H."/>
            <person name="Ramser J."/>
            <person name="Beck A."/>
            <person name="Klages S."/>
            <person name="Hennig S."/>
            <person name="Riesselmann L."/>
            <person name="Dagand E."/>
            <person name="Wehrmeyer S."/>
            <person name="Borzym K."/>
            <person name="Gardiner K."/>
            <person name="Nizetic D."/>
            <person name="Francis F."/>
            <person name="Lehrach H."/>
            <person name="Reinhardt R."/>
            <person name="Yaspo M.-L."/>
        </authorList>
    </citation>
    <scope>NUCLEOTIDE SEQUENCE [LARGE SCALE GENOMIC DNA]</scope>
</reference>
<reference key="4">
    <citation type="journal article" date="2023" name="Cells">
        <title>Polycystin-1 Interacting Protein-1 (CU062) Interacts with the Ectodomain of Polycystin-1 (PC1).</title>
        <authorList>
            <person name="Lea W.A."/>
            <person name="Winklhofer T."/>
            <person name="Zelenchuk L."/>
            <person name="Sharma M."/>
            <person name="Rossol-Allison J."/>
            <person name="Fields T.A."/>
            <person name="Reif G."/>
            <person name="Calvet J.P."/>
            <person name="Bakeberg J.L."/>
            <person name="Wallace D.P."/>
            <person name="Ward C.J."/>
        </authorList>
    </citation>
    <scope>FUNCTION</scope>
    <scope>SUBUNIT</scope>
    <scope>INTERACTION WITH PKD1</scope>
    <scope>SUBCELLULAR LOCATION</scope>
    <scope>TISSUE SPECIFICITY</scope>
    <scope>GLYCOSYLATION</scope>
</reference>
<comment type="function">
    <text evidence="2">Likely to be involved with PKD1 in the detection, sequestration and exocytosis of senescent mitochondria.</text>
</comment>
<comment type="subunit">
    <text evidence="2">Homooligomer (PubMed:37681898). Interacts with PKD1 (via the PKD repeats in the N-terminal extracellular region); the interaction is not dependent on N-glycosylation of either protein (PubMed:37681898).</text>
</comment>
<comment type="interaction">
    <interactant intactId="EBI-55030256">
        <id>Q9NYP8</id>
    </interactant>
    <interactant intactId="EBI-55030256">
        <id>Q9NYP8</id>
        <label>EPCIP</label>
    </interactant>
    <organismsDiffer>false</organismsDiffer>
    <experiments>2</experiments>
</comment>
<comment type="interaction">
    <interactant intactId="EBI-55030256">
        <id>Q9NYP8</id>
    </interactant>
    <interactant intactId="EBI-1752013">
        <id>P98161</id>
        <label>PKD1</label>
    </interactant>
    <organismsDiffer>false</organismsDiffer>
    <experiments>6</experiments>
</comment>
<comment type="subcellular location">
    <subcellularLocation>
        <location evidence="2">Vesicle</location>
    </subcellularLocation>
    <subcellularLocation>
        <location evidence="2">Secreted</location>
        <location evidence="2">Extracellular exosome</location>
    </subcellularLocation>
    <text evidence="2">Detected on migrasomes and on extracellular exosomes in blood and urine.</text>
</comment>
<comment type="tissue specificity">
    <text evidence="2">Detected in the kidney and in the endothelium of large blood vessels (at protein level).</text>
</comment>
<comment type="PTM">
    <text evidence="2">N-glycosylated.</text>
</comment>
<comment type="similarity">
    <text evidence="4">Belongs to the EPCIP family.</text>
</comment>
<comment type="sequence caution" evidence="4">
    <conflict type="frameshift">
        <sequence resource="EMBL-CDS" id="AAF72946"/>
    </conflict>
</comment>
<proteinExistence type="evidence at protein level"/>
<feature type="signal peptide" evidence="1">
    <location>
        <begin position="1"/>
        <end position="19"/>
    </location>
</feature>
<feature type="chain" id="PRO_0000079524" description="Exosomal polycystin-1-interacting protein">
    <location>
        <begin position="20"/>
        <end position="219"/>
    </location>
</feature>
<feature type="glycosylation site" description="N-linked (GlcNAc...) asparagine" evidence="1">
    <location>
        <position position="29"/>
    </location>
</feature>
<feature type="glycosylation site" description="N-linked (GlcNAc...) asparagine" evidence="1">
    <location>
        <position position="42"/>
    </location>
</feature>
<feature type="glycosylation site" description="N-linked (GlcNAc...) asparagine" evidence="1">
    <location>
        <position position="95"/>
    </location>
</feature>
<feature type="glycosylation site" description="N-linked (GlcNAc...) asparagine" evidence="1">
    <location>
        <position position="188"/>
    </location>
</feature>
<feature type="glycosylation site" description="N-linked (GlcNAc...) asparagine" evidence="1">
    <location>
        <position position="210"/>
    </location>
</feature>
<sequence>MAPPSRHCLLLISTLGVFALNCFTKGQKNSTLIFTRENTIRNCSCSADIRDCDYSLANLMCNCKTVLPLAVERTSYNGHLTIWFTDTSALGHLLNFTLVQDLKLSLCSTNTLPTEYLAICGLKRLRINMEAKHPFPEQSLLIHSGGDSDSREKPMWLHKGWQPCMYISFLDMALFNRDSALKSYSIENVTSIANNFPDFSYFRTFPMPSNKSYVVTFIY</sequence>
<organism>
    <name type="scientific">Homo sapiens</name>
    <name type="common">Human</name>
    <dbReference type="NCBI Taxonomy" id="9606"/>
    <lineage>
        <taxon>Eukaryota</taxon>
        <taxon>Metazoa</taxon>
        <taxon>Chordata</taxon>
        <taxon>Craniata</taxon>
        <taxon>Vertebrata</taxon>
        <taxon>Euteleostomi</taxon>
        <taxon>Mammalia</taxon>
        <taxon>Eutheria</taxon>
        <taxon>Euarchontoglires</taxon>
        <taxon>Primates</taxon>
        <taxon>Haplorrhini</taxon>
        <taxon>Catarrhini</taxon>
        <taxon>Hominidae</taxon>
        <taxon>Homo</taxon>
    </lineage>
</organism>
<evidence type="ECO:0000255" key="1"/>
<evidence type="ECO:0000269" key="2">
    <source>
    </source>
</evidence>
<evidence type="ECO:0000303" key="3">
    <source>
    </source>
</evidence>
<evidence type="ECO:0000305" key="4"/>
<evidence type="ECO:0000312" key="5">
    <source>
        <dbReference type="HGNC" id="HGNC:1305"/>
    </source>
</evidence>
<keyword id="KW-0325">Glycoprotein</keyword>
<keyword id="KW-1185">Reference proteome</keyword>
<keyword id="KW-0964">Secreted</keyword>
<keyword id="KW-0732">Signal</keyword>
<gene>
    <name evidence="5" type="primary">EPCIP</name>
    <name type="synonym">C21orf120</name>
    <name type="synonym">C21orf62</name>
    <name evidence="3" type="synonym">CU062</name>
</gene>
<accession>Q9NYP8</accession>
<accession>A8K4L8</accession>